<proteinExistence type="inferred from homology"/>
<accession>Q1JMZ5</accession>
<keyword id="KW-0963">Cytoplasm</keyword>
<keyword id="KW-0378">Hydrolase</keyword>
<keyword id="KW-0645">Protease</keyword>
<keyword id="KW-0788">Thiol protease</keyword>
<reference key="1">
    <citation type="journal article" date="2006" name="Proc. Natl. Acad. Sci. U.S.A.">
        <title>Molecular genetic anatomy of inter- and intraserotype variation in the human bacterial pathogen group A Streptococcus.</title>
        <authorList>
            <person name="Beres S.B."/>
            <person name="Richter E.W."/>
            <person name="Nagiec M.J."/>
            <person name="Sumby P."/>
            <person name="Porcella S.F."/>
            <person name="DeLeo F.R."/>
            <person name="Musser J.M."/>
        </authorList>
    </citation>
    <scope>NUCLEOTIDE SEQUENCE [LARGE SCALE GENOMIC DNA]</scope>
    <source>
        <strain>MGAS9429</strain>
    </source>
</reference>
<gene>
    <name evidence="1" type="primary">pcp</name>
    <name type="ordered locus">MGAS9429_Spy0416</name>
</gene>
<comment type="function">
    <text evidence="1">Removes 5-oxoproline from various penultimate amino acid residues except L-proline.</text>
</comment>
<comment type="catalytic activity">
    <reaction evidence="1">
        <text>Release of an N-terminal pyroglutamyl group from a polypeptide, the second amino acid generally not being Pro.</text>
        <dbReference type="EC" id="3.4.19.3"/>
    </reaction>
</comment>
<comment type="subunit">
    <text evidence="1">Homotetramer.</text>
</comment>
<comment type="subcellular location">
    <subcellularLocation>
        <location evidence="1">Cytoplasm</location>
    </subcellularLocation>
</comment>
<comment type="similarity">
    <text evidence="1">Belongs to the peptidase C15 family.</text>
</comment>
<evidence type="ECO:0000255" key="1">
    <source>
        <dbReference type="HAMAP-Rule" id="MF_00417"/>
    </source>
</evidence>
<sequence length="215" mass="23192">MKILVTGFDPFGGEAINPALEAIKKLPATIHGAEIKYIEVPTVFQKSADVLQQHIESFQPDAVLCIGQAGGRTGLTPERVAINQDDARIPDNEGNQPIDTPIRADGKAAYFSTLPIKAMVAAIHQAGLPASVSNTAGTFVCNHLMYQALYLVDKYCPNAKAGFMHIPFMMEQVVDKPNTAAMNLDDITRGIEAAIFAIVDFKDRSDLKRVGGATH</sequence>
<name>PCP_STRPC</name>
<protein>
    <recommendedName>
        <fullName evidence="1">Pyrrolidone-carboxylate peptidase</fullName>
        <ecNumber evidence="1">3.4.19.3</ecNumber>
    </recommendedName>
    <alternativeName>
        <fullName evidence="1">5-oxoprolyl-peptidase</fullName>
    </alternativeName>
    <alternativeName>
        <fullName evidence="1">Pyroglutamyl-peptidase I</fullName>
        <shortName evidence="1">PGP-I</shortName>
        <shortName evidence="1">Pyrase</shortName>
    </alternativeName>
</protein>
<organism>
    <name type="scientific">Streptococcus pyogenes serotype M12 (strain MGAS9429)</name>
    <dbReference type="NCBI Taxonomy" id="370551"/>
    <lineage>
        <taxon>Bacteria</taxon>
        <taxon>Bacillati</taxon>
        <taxon>Bacillota</taxon>
        <taxon>Bacilli</taxon>
        <taxon>Lactobacillales</taxon>
        <taxon>Streptococcaceae</taxon>
        <taxon>Streptococcus</taxon>
    </lineage>
</organism>
<feature type="chain" id="PRO_1000050145" description="Pyrrolidone-carboxylate peptidase">
    <location>
        <begin position="1"/>
        <end position="215"/>
    </location>
</feature>
<feature type="active site" evidence="1">
    <location>
        <position position="78"/>
    </location>
</feature>
<feature type="active site" evidence="1">
    <location>
        <position position="141"/>
    </location>
</feature>
<feature type="active site" evidence="1">
    <location>
        <position position="165"/>
    </location>
</feature>
<dbReference type="EC" id="3.4.19.3" evidence="1"/>
<dbReference type="EMBL" id="CP000259">
    <property type="protein sequence ID" value="ABF31604.1"/>
    <property type="molecule type" value="Genomic_DNA"/>
</dbReference>
<dbReference type="RefSeq" id="WP_002990717.1">
    <property type="nucleotide sequence ID" value="NC_008021.1"/>
</dbReference>
<dbReference type="SMR" id="Q1JMZ5"/>
<dbReference type="MEROPS" id="C15.001"/>
<dbReference type="KEGG" id="spk:MGAS9429_Spy0416"/>
<dbReference type="HOGENOM" id="CLU_043960_4_0_9"/>
<dbReference type="Proteomes" id="UP000002433">
    <property type="component" value="Chromosome"/>
</dbReference>
<dbReference type="GO" id="GO:0005829">
    <property type="term" value="C:cytosol"/>
    <property type="evidence" value="ECO:0007669"/>
    <property type="project" value="InterPro"/>
</dbReference>
<dbReference type="GO" id="GO:0016920">
    <property type="term" value="F:pyroglutamyl-peptidase activity"/>
    <property type="evidence" value="ECO:0007669"/>
    <property type="project" value="UniProtKB-UniRule"/>
</dbReference>
<dbReference type="GO" id="GO:0006508">
    <property type="term" value="P:proteolysis"/>
    <property type="evidence" value="ECO:0007669"/>
    <property type="project" value="UniProtKB-KW"/>
</dbReference>
<dbReference type="CDD" id="cd00501">
    <property type="entry name" value="Peptidase_C15"/>
    <property type="match status" value="1"/>
</dbReference>
<dbReference type="FunFam" id="3.40.630.20:FF:000001">
    <property type="entry name" value="Pyrrolidone-carboxylate peptidase"/>
    <property type="match status" value="1"/>
</dbReference>
<dbReference type="Gene3D" id="3.40.630.20">
    <property type="entry name" value="Peptidase C15, pyroglutamyl peptidase I-like"/>
    <property type="match status" value="1"/>
</dbReference>
<dbReference type="HAMAP" id="MF_00417">
    <property type="entry name" value="Pyrrolid_peptidase"/>
    <property type="match status" value="1"/>
</dbReference>
<dbReference type="InterPro" id="IPR000816">
    <property type="entry name" value="Peptidase_C15"/>
</dbReference>
<dbReference type="InterPro" id="IPR016125">
    <property type="entry name" value="Peptidase_C15-like"/>
</dbReference>
<dbReference type="InterPro" id="IPR036440">
    <property type="entry name" value="Peptidase_C15-like_sf"/>
</dbReference>
<dbReference type="InterPro" id="IPR029762">
    <property type="entry name" value="PGP-I_bact-type"/>
</dbReference>
<dbReference type="InterPro" id="IPR033694">
    <property type="entry name" value="PGPEP1_Cys_AS"/>
</dbReference>
<dbReference type="InterPro" id="IPR033693">
    <property type="entry name" value="PGPEP1_Glu_AS"/>
</dbReference>
<dbReference type="NCBIfam" id="NF009676">
    <property type="entry name" value="PRK13197.1"/>
    <property type="match status" value="1"/>
</dbReference>
<dbReference type="NCBIfam" id="TIGR00504">
    <property type="entry name" value="pyro_pdase"/>
    <property type="match status" value="1"/>
</dbReference>
<dbReference type="PANTHER" id="PTHR23402">
    <property type="entry name" value="PROTEASE FAMILY C15 PYROGLUTAMYL-PEPTIDASE I-RELATED"/>
    <property type="match status" value="1"/>
</dbReference>
<dbReference type="PANTHER" id="PTHR23402:SF1">
    <property type="entry name" value="PYROGLUTAMYL-PEPTIDASE I"/>
    <property type="match status" value="1"/>
</dbReference>
<dbReference type="Pfam" id="PF01470">
    <property type="entry name" value="Peptidase_C15"/>
    <property type="match status" value="1"/>
</dbReference>
<dbReference type="PIRSF" id="PIRSF015592">
    <property type="entry name" value="Prld-crbxl_pptds"/>
    <property type="match status" value="1"/>
</dbReference>
<dbReference type="PRINTS" id="PR00706">
    <property type="entry name" value="PYROGLUPTASE"/>
</dbReference>
<dbReference type="SUPFAM" id="SSF53182">
    <property type="entry name" value="Pyrrolidone carboxyl peptidase (pyroglutamate aminopeptidase)"/>
    <property type="match status" value="1"/>
</dbReference>
<dbReference type="PROSITE" id="PS01334">
    <property type="entry name" value="PYRASE_CYS"/>
    <property type="match status" value="1"/>
</dbReference>
<dbReference type="PROSITE" id="PS01333">
    <property type="entry name" value="PYRASE_GLU"/>
    <property type="match status" value="1"/>
</dbReference>